<feature type="chain" id="PRO_0000264695" description="Acetylglutamate kinase">
    <location>
        <begin position="1"/>
        <end position="260"/>
    </location>
</feature>
<feature type="binding site" evidence="1">
    <location>
        <begin position="45"/>
        <end position="46"/>
    </location>
    <ligand>
        <name>substrate</name>
    </ligand>
</feature>
<feature type="binding site" evidence="1">
    <location>
        <position position="67"/>
    </location>
    <ligand>
        <name>substrate</name>
    </ligand>
</feature>
<feature type="binding site" evidence="1">
    <location>
        <position position="159"/>
    </location>
    <ligand>
        <name>substrate</name>
    </ligand>
</feature>
<feature type="site" description="Transition state stabilizer" evidence="1">
    <location>
        <position position="12"/>
    </location>
</feature>
<feature type="site" description="Transition state stabilizer" evidence="1">
    <location>
        <position position="218"/>
    </location>
</feature>
<gene>
    <name evidence="1" type="primary">argB</name>
    <name type="ordered locus">CPS_0461</name>
</gene>
<organism>
    <name type="scientific">Colwellia psychrerythraea (strain 34H / ATCC BAA-681)</name>
    <name type="common">Vibrio psychroerythus</name>
    <dbReference type="NCBI Taxonomy" id="167879"/>
    <lineage>
        <taxon>Bacteria</taxon>
        <taxon>Pseudomonadati</taxon>
        <taxon>Pseudomonadota</taxon>
        <taxon>Gammaproteobacteria</taxon>
        <taxon>Alteromonadales</taxon>
        <taxon>Colwelliaceae</taxon>
        <taxon>Colwellia</taxon>
    </lineage>
</organism>
<proteinExistence type="inferred from homology"/>
<evidence type="ECO:0000255" key="1">
    <source>
        <dbReference type="HAMAP-Rule" id="MF_00082"/>
    </source>
</evidence>
<protein>
    <recommendedName>
        <fullName evidence="1">Acetylglutamate kinase</fullName>
        <ecNumber evidence="1">2.7.2.8</ecNumber>
    </recommendedName>
    <alternativeName>
        <fullName evidence="1">N-acetyl-L-glutamate 5-phosphotransferase</fullName>
    </alternativeName>
    <alternativeName>
        <fullName evidence="1">NAG kinase</fullName>
        <shortName evidence="1">NAGK</shortName>
    </alternativeName>
</protein>
<reference key="1">
    <citation type="journal article" date="2005" name="Proc. Natl. Acad. Sci. U.S.A.">
        <title>The psychrophilic lifestyle as revealed by the genome sequence of Colwellia psychrerythraea 34H through genomic and proteomic analyses.</title>
        <authorList>
            <person name="Methe B.A."/>
            <person name="Nelson K.E."/>
            <person name="Deming J.W."/>
            <person name="Momen B."/>
            <person name="Melamud E."/>
            <person name="Zhang X."/>
            <person name="Moult J."/>
            <person name="Madupu R."/>
            <person name="Nelson W.C."/>
            <person name="Dodson R.J."/>
            <person name="Brinkac L.M."/>
            <person name="Daugherty S.C."/>
            <person name="Durkin A.S."/>
            <person name="DeBoy R.T."/>
            <person name="Kolonay J.F."/>
            <person name="Sullivan S.A."/>
            <person name="Zhou L."/>
            <person name="Davidsen T.M."/>
            <person name="Wu M."/>
            <person name="Huston A.L."/>
            <person name="Lewis M."/>
            <person name="Weaver B."/>
            <person name="Weidman J.F."/>
            <person name="Khouri H."/>
            <person name="Utterback T.R."/>
            <person name="Feldblyum T.V."/>
            <person name="Fraser C.M."/>
        </authorList>
    </citation>
    <scope>NUCLEOTIDE SEQUENCE [LARGE SCALE GENOMIC DNA]</scope>
    <source>
        <strain>34H / ATCC BAA-681</strain>
    </source>
</reference>
<name>ARGB_COLP3</name>
<comment type="function">
    <text evidence="1">Catalyzes the ATP-dependent phosphorylation of N-acetyl-L-glutamate.</text>
</comment>
<comment type="catalytic activity">
    <reaction evidence="1">
        <text>N-acetyl-L-glutamate + ATP = N-acetyl-L-glutamyl 5-phosphate + ADP</text>
        <dbReference type="Rhea" id="RHEA:14629"/>
        <dbReference type="ChEBI" id="CHEBI:30616"/>
        <dbReference type="ChEBI" id="CHEBI:44337"/>
        <dbReference type="ChEBI" id="CHEBI:57936"/>
        <dbReference type="ChEBI" id="CHEBI:456216"/>
        <dbReference type="EC" id="2.7.2.8"/>
    </reaction>
</comment>
<comment type="pathway">
    <text evidence="1">Amino-acid biosynthesis; L-arginine biosynthesis; N(2)-acetyl-L-ornithine from L-glutamate: step 2/4.</text>
</comment>
<comment type="subcellular location">
    <subcellularLocation>
        <location evidence="1">Cytoplasm</location>
    </subcellularLocation>
</comment>
<comment type="similarity">
    <text evidence="1">Belongs to the acetylglutamate kinase family. ArgB subfamily.</text>
</comment>
<sequence length="260" mass="26982">MNNPVLKPLVIKIGGAILEKESALNALLNVISQLKNKQVVLVHGGGCVVDEMLAQAGFTTEKKHGLRVTPKEQVGLISGALAGTVNKAIVGTANSMDLAAVGLSLNDGDMISCTLSTQDLGQVGVPQTNNSKLLDCLLKAKFLPVISSIGALDNGDLVNVNADDAAVAICQLLNAELLLLTDVNGVKDADGEYLSSLNAEQAQKLIEQGVIAGGMTAKVNAALHAAQQLRRSIAVASWQSPEQITQLLDGHGVGTQIQPN</sequence>
<keyword id="KW-0028">Amino-acid biosynthesis</keyword>
<keyword id="KW-0055">Arginine biosynthesis</keyword>
<keyword id="KW-0067">ATP-binding</keyword>
<keyword id="KW-0963">Cytoplasm</keyword>
<keyword id="KW-0418">Kinase</keyword>
<keyword id="KW-0547">Nucleotide-binding</keyword>
<keyword id="KW-0808">Transferase</keyword>
<accession>Q489P5</accession>
<dbReference type="EC" id="2.7.2.8" evidence="1"/>
<dbReference type="EMBL" id="CP000083">
    <property type="protein sequence ID" value="AAZ27722.1"/>
    <property type="molecule type" value="Genomic_DNA"/>
</dbReference>
<dbReference type="RefSeq" id="WP_011041322.1">
    <property type="nucleotide sequence ID" value="NC_003910.7"/>
</dbReference>
<dbReference type="SMR" id="Q489P5"/>
<dbReference type="STRING" id="167879.CPS_0461"/>
<dbReference type="KEGG" id="cps:CPS_0461"/>
<dbReference type="eggNOG" id="COG0548">
    <property type="taxonomic scope" value="Bacteria"/>
</dbReference>
<dbReference type="HOGENOM" id="CLU_053680_1_1_6"/>
<dbReference type="UniPathway" id="UPA00068">
    <property type="reaction ID" value="UER00107"/>
</dbReference>
<dbReference type="Proteomes" id="UP000000547">
    <property type="component" value="Chromosome"/>
</dbReference>
<dbReference type="GO" id="GO:0005737">
    <property type="term" value="C:cytoplasm"/>
    <property type="evidence" value="ECO:0007669"/>
    <property type="project" value="UniProtKB-SubCell"/>
</dbReference>
<dbReference type="GO" id="GO:0003991">
    <property type="term" value="F:acetylglutamate kinase activity"/>
    <property type="evidence" value="ECO:0007669"/>
    <property type="project" value="UniProtKB-UniRule"/>
</dbReference>
<dbReference type="GO" id="GO:0005524">
    <property type="term" value="F:ATP binding"/>
    <property type="evidence" value="ECO:0007669"/>
    <property type="project" value="UniProtKB-UniRule"/>
</dbReference>
<dbReference type="GO" id="GO:0042450">
    <property type="term" value="P:arginine biosynthetic process via ornithine"/>
    <property type="evidence" value="ECO:0007669"/>
    <property type="project" value="UniProtKB-UniRule"/>
</dbReference>
<dbReference type="GO" id="GO:0006526">
    <property type="term" value="P:L-arginine biosynthetic process"/>
    <property type="evidence" value="ECO:0007669"/>
    <property type="project" value="UniProtKB-UniPathway"/>
</dbReference>
<dbReference type="Gene3D" id="3.40.1160.10">
    <property type="entry name" value="Acetylglutamate kinase-like"/>
    <property type="match status" value="1"/>
</dbReference>
<dbReference type="HAMAP" id="MF_00082">
    <property type="entry name" value="ArgB"/>
    <property type="match status" value="1"/>
</dbReference>
<dbReference type="InterPro" id="IPR036393">
    <property type="entry name" value="AceGlu_kinase-like_sf"/>
</dbReference>
<dbReference type="InterPro" id="IPR004662">
    <property type="entry name" value="AcgluKinase_fam"/>
</dbReference>
<dbReference type="InterPro" id="IPR037528">
    <property type="entry name" value="ArgB"/>
</dbReference>
<dbReference type="InterPro" id="IPR001048">
    <property type="entry name" value="Asp/Glu/Uridylate_kinase"/>
</dbReference>
<dbReference type="NCBIfam" id="TIGR00761">
    <property type="entry name" value="argB"/>
    <property type="match status" value="1"/>
</dbReference>
<dbReference type="PANTHER" id="PTHR23342">
    <property type="entry name" value="N-ACETYLGLUTAMATE SYNTHASE"/>
    <property type="match status" value="1"/>
</dbReference>
<dbReference type="PANTHER" id="PTHR23342:SF0">
    <property type="entry name" value="N-ACETYLGLUTAMATE SYNTHASE, MITOCHONDRIAL"/>
    <property type="match status" value="1"/>
</dbReference>
<dbReference type="Pfam" id="PF00696">
    <property type="entry name" value="AA_kinase"/>
    <property type="match status" value="1"/>
</dbReference>
<dbReference type="PIRSF" id="PIRSF000728">
    <property type="entry name" value="NAGK"/>
    <property type="match status" value="1"/>
</dbReference>
<dbReference type="SUPFAM" id="SSF53633">
    <property type="entry name" value="Carbamate kinase-like"/>
    <property type="match status" value="1"/>
</dbReference>